<feature type="chain" id="PRO_1000050667" description="Large ribosomal subunit protein bL35">
    <location>
        <begin position="1"/>
        <end position="65"/>
    </location>
</feature>
<keyword id="KW-0687">Ribonucleoprotein</keyword>
<keyword id="KW-0689">Ribosomal protein</keyword>
<proteinExistence type="inferred from homology"/>
<name>RL35_BURMS</name>
<reference key="1">
    <citation type="journal article" date="2010" name="Genome Biol. Evol.">
        <title>Continuing evolution of Burkholderia mallei through genome reduction and large-scale rearrangements.</title>
        <authorList>
            <person name="Losada L."/>
            <person name="Ronning C.M."/>
            <person name="DeShazer D."/>
            <person name="Woods D."/>
            <person name="Fedorova N."/>
            <person name="Kim H.S."/>
            <person name="Shabalina S.A."/>
            <person name="Pearson T.R."/>
            <person name="Brinkac L."/>
            <person name="Tan P."/>
            <person name="Nandi T."/>
            <person name="Crabtree J."/>
            <person name="Badger J."/>
            <person name="Beckstrom-Sternberg S."/>
            <person name="Saqib M."/>
            <person name="Schutzer S.E."/>
            <person name="Keim P."/>
            <person name="Nierman W.C."/>
        </authorList>
    </citation>
    <scope>NUCLEOTIDE SEQUENCE [LARGE SCALE GENOMIC DNA]</scope>
    <source>
        <strain>SAVP1</strain>
    </source>
</reference>
<sequence>MPKMKTKKSAAKRFVVRPGGTVKRGQAFKRHILTKKTTKNKRHLRGATAVHDSDLNSVRAMLPFA</sequence>
<protein>
    <recommendedName>
        <fullName evidence="1">Large ribosomal subunit protein bL35</fullName>
    </recommendedName>
    <alternativeName>
        <fullName evidence="2">50S ribosomal protein L35</fullName>
    </alternativeName>
</protein>
<accession>A1V3R1</accession>
<organism>
    <name type="scientific">Burkholderia mallei (strain SAVP1)</name>
    <dbReference type="NCBI Taxonomy" id="320388"/>
    <lineage>
        <taxon>Bacteria</taxon>
        <taxon>Pseudomonadati</taxon>
        <taxon>Pseudomonadota</taxon>
        <taxon>Betaproteobacteria</taxon>
        <taxon>Burkholderiales</taxon>
        <taxon>Burkholderiaceae</taxon>
        <taxon>Burkholderia</taxon>
        <taxon>pseudomallei group</taxon>
    </lineage>
</organism>
<evidence type="ECO:0000255" key="1">
    <source>
        <dbReference type="HAMAP-Rule" id="MF_00514"/>
    </source>
</evidence>
<evidence type="ECO:0000305" key="2"/>
<gene>
    <name evidence="1" type="primary">rpmI</name>
    <name type="ordered locus">BMASAVP1_A1537</name>
</gene>
<dbReference type="EMBL" id="CP000526">
    <property type="protein sequence ID" value="ABM50052.1"/>
    <property type="molecule type" value="Genomic_DNA"/>
</dbReference>
<dbReference type="RefSeq" id="WP_004191477.1">
    <property type="nucleotide sequence ID" value="NC_008785.1"/>
</dbReference>
<dbReference type="SMR" id="A1V3R1"/>
<dbReference type="GeneID" id="98102115"/>
<dbReference type="KEGG" id="bmv:BMASAVP1_A1537"/>
<dbReference type="HOGENOM" id="CLU_169643_1_0_4"/>
<dbReference type="GO" id="GO:0022625">
    <property type="term" value="C:cytosolic large ribosomal subunit"/>
    <property type="evidence" value="ECO:0007669"/>
    <property type="project" value="TreeGrafter"/>
</dbReference>
<dbReference type="GO" id="GO:0003735">
    <property type="term" value="F:structural constituent of ribosome"/>
    <property type="evidence" value="ECO:0007669"/>
    <property type="project" value="InterPro"/>
</dbReference>
<dbReference type="GO" id="GO:0006412">
    <property type="term" value="P:translation"/>
    <property type="evidence" value="ECO:0007669"/>
    <property type="project" value="UniProtKB-UniRule"/>
</dbReference>
<dbReference type="FunFam" id="4.10.410.60:FF:000001">
    <property type="entry name" value="50S ribosomal protein L35"/>
    <property type="match status" value="1"/>
</dbReference>
<dbReference type="Gene3D" id="4.10.410.60">
    <property type="match status" value="1"/>
</dbReference>
<dbReference type="HAMAP" id="MF_00514">
    <property type="entry name" value="Ribosomal_bL35"/>
    <property type="match status" value="1"/>
</dbReference>
<dbReference type="InterPro" id="IPR001706">
    <property type="entry name" value="Ribosomal_bL35"/>
</dbReference>
<dbReference type="InterPro" id="IPR021137">
    <property type="entry name" value="Ribosomal_bL35-like"/>
</dbReference>
<dbReference type="InterPro" id="IPR018265">
    <property type="entry name" value="Ribosomal_bL35_CS"/>
</dbReference>
<dbReference type="InterPro" id="IPR037229">
    <property type="entry name" value="Ribosomal_bL35_sf"/>
</dbReference>
<dbReference type="NCBIfam" id="TIGR00001">
    <property type="entry name" value="rpmI_bact"/>
    <property type="match status" value="1"/>
</dbReference>
<dbReference type="PANTHER" id="PTHR33343">
    <property type="entry name" value="54S RIBOSOMAL PROTEIN BL35M"/>
    <property type="match status" value="1"/>
</dbReference>
<dbReference type="PANTHER" id="PTHR33343:SF1">
    <property type="entry name" value="LARGE RIBOSOMAL SUBUNIT PROTEIN BL35M"/>
    <property type="match status" value="1"/>
</dbReference>
<dbReference type="Pfam" id="PF01632">
    <property type="entry name" value="Ribosomal_L35p"/>
    <property type="match status" value="1"/>
</dbReference>
<dbReference type="PRINTS" id="PR00064">
    <property type="entry name" value="RIBOSOMALL35"/>
</dbReference>
<dbReference type="SUPFAM" id="SSF143034">
    <property type="entry name" value="L35p-like"/>
    <property type="match status" value="1"/>
</dbReference>
<dbReference type="PROSITE" id="PS00936">
    <property type="entry name" value="RIBOSOMAL_L35"/>
    <property type="match status" value="1"/>
</dbReference>
<comment type="similarity">
    <text evidence="1">Belongs to the bacterial ribosomal protein bL35 family.</text>
</comment>